<reference key="1">
    <citation type="journal article" date="1988" name="EMBO J.">
        <title>The topogenic signal of the glycosomal (microbody) phosphoglycerate kinase of Crithidia fasciculata resides in a carboxy-terminal extension.</title>
        <authorList>
            <person name="Swinkels B.W."/>
            <person name="Evers R."/>
            <person name="Borst P."/>
        </authorList>
    </citation>
    <scope>NUCLEOTIDE SEQUENCE [GENOMIC DNA]</scope>
</reference>
<sequence>MSLAPKKTIDDAVVKGKKVLIRVDFNVPVKNGEITNDFRIRSALPTIQKVLKEGGSCILMSHLGRPKGAKMSDPKPAKSVRGYEEAATLRPVAARLSELLGQKVEFAPDCLDAASYAAKLKGGDVLLLENVRFYAEEGSKKEEERDAMAKVLAAYGDVYVSDAFGTAHRDSADMTGIPKVLGAGYAGYLMEKEINYFAQVLNNPPRPLVAIVGGAKVSDKIQLLDNMLGRINYLVIGGAMAYTFQKAQGHAIGISMCEEDKLDLAKSLLKKAQERNVEVLLPVDHVCNKEFQGVDAPLVTKDVEIPEGYMALDIGPKTIKIYEDVIAKCKSTIWNGPMGVFEMPCYSKGTFAVAKAMGNGTQKNGLMSIIGGGDTASAAELSGEAKNMSHVSTGGGASLELLEGKSLPGVTVLTNKE</sequence>
<dbReference type="EC" id="2.7.2.3" evidence="1"/>
<dbReference type="EMBL" id="X07458">
    <property type="protein sequence ID" value="CAA30341.1"/>
    <property type="molecule type" value="Genomic_DNA"/>
</dbReference>
<dbReference type="PIR" id="S00486">
    <property type="entry name" value="TVCRGC"/>
</dbReference>
<dbReference type="SMR" id="P08966"/>
<dbReference type="VEuPathDB" id="TriTrypDB:CFAC1_180006900"/>
<dbReference type="UniPathway" id="UPA00109">
    <property type="reaction ID" value="UER00185"/>
</dbReference>
<dbReference type="GO" id="GO:0005829">
    <property type="term" value="C:cytosol"/>
    <property type="evidence" value="ECO:0007669"/>
    <property type="project" value="TreeGrafter"/>
</dbReference>
<dbReference type="GO" id="GO:0043531">
    <property type="term" value="F:ADP binding"/>
    <property type="evidence" value="ECO:0007669"/>
    <property type="project" value="TreeGrafter"/>
</dbReference>
<dbReference type="GO" id="GO:0005524">
    <property type="term" value="F:ATP binding"/>
    <property type="evidence" value="ECO:0007669"/>
    <property type="project" value="UniProtKB-KW"/>
</dbReference>
<dbReference type="GO" id="GO:0046872">
    <property type="term" value="F:metal ion binding"/>
    <property type="evidence" value="ECO:0007669"/>
    <property type="project" value="UniProtKB-KW"/>
</dbReference>
<dbReference type="GO" id="GO:0004618">
    <property type="term" value="F:phosphoglycerate kinase activity"/>
    <property type="evidence" value="ECO:0007669"/>
    <property type="project" value="UniProtKB-EC"/>
</dbReference>
<dbReference type="GO" id="GO:0006094">
    <property type="term" value="P:gluconeogenesis"/>
    <property type="evidence" value="ECO:0007669"/>
    <property type="project" value="TreeGrafter"/>
</dbReference>
<dbReference type="GO" id="GO:0006096">
    <property type="term" value="P:glycolytic process"/>
    <property type="evidence" value="ECO:0007669"/>
    <property type="project" value="UniProtKB-UniPathway"/>
</dbReference>
<dbReference type="CDD" id="cd00318">
    <property type="entry name" value="Phosphoglycerate_kinase"/>
    <property type="match status" value="1"/>
</dbReference>
<dbReference type="FunFam" id="3.40.50.1260:FF:000001">
    <property type="entry name" value="Phosphoglycerate kinase"/>
    <property type="match status" value="1"/>
</dbReference>
<dbReference type="FunFam" id="3.40.50.1260:FF:000011">
    <property type="entry name" value="Phosphoglycerate kinase"/>
    <property type="match status" value="1"/>
</dbReference>
<dbReference type="Gene3D" id="3.40.50.1260">
    <property type="entry name" value="Phosphoglycerate kinase, N-terminal domain"/>
    <property type="match status" value="2"/>
</dbReference>
<dbReference type="HAMAP" id="MF_00145">
    <property type="entry name" value="Phosphoglyc_kinase"/>
    <property type="match status" value="1"/>
</dbReference>
<dbReference type="InterPro" id="IPR027250">
    <property type="entry name" value="Pgk_euglenozoa"/>
</dbReference>
<dbReference type="InterPro" id="IPR001576">
    <property type="entry name" value="Phosphoglycerate_kinase"/>
</dbReference>
<dbReference type="InterPro" id="IPR015911">
    <property type="entry name" value="Phosphoglycerate_kinase_CS"/>
</dbReference>
<dbReference type="InterPro" id="IPR015824">
    <property type="entry name" value="Phosphoglycerate_kinase_N"/>
</dbReference>
<dbReference type="InterPro" id="IPR036043">
    <property type="entry name" value="Phosphoglycerate_kinase_sf"/>
</dbReference>
<dbReference type="PANTHER" id="PTHR11406">
    <property type="entry name" value="PHOSPHOGLYCERATE KINASE"/>
    <property type="match status" value="1"/>
</dbReference>
<dbReference type="PANTHER" id="PTHR11406:SF23">
    <property type="entry name" value="PHOSPHOGLYCERATE KINASE 1, CHLOROPLASTIC-RELATED"/>
    <property type="match status" value="1"/>
</dbReference>
<dbReference type="Pfam" id="PF00162">
    <property type="entry name" value="PGK"/>
    <property type="match status" value="1"/>
</dbReference>
<dbReference type="PIRSF" id="PIRSF000724">
    <property type="entry name" value="Pgk"/>
    <property type="match status" value="1"/>
</dbReference>
<dbReference type="PIRSF" id="PIRSF500126">
    <property type="entry name" value="Pgk_euglenozoa"/>
    <property type="match status" value="1"/>
</dbReference>
<dbReference type="PRINTS" id="PR00477">
    <property type="entry name" value="PHGLYCKINASE"/>
</dbReference>
<dbReference type="SUPFAM" id="SSF53748">
    <property type="entry name" value="Phosphoglycerate kinase"/>
    <property type="match status" value="1"/>
</dbReference>
<dbReference type="PROSITE" id="PS00111">
    <property type="entry name" value="PGLYCERATE_KINASE"/>
    <property type="match status" value="1"/>
</dbReference>
<organism>
    <name type="scientific">Crithidia fasciculata</name>
    <dbReference type="NCBI Taxonomy" id="5656"/>
    <lineage>
        <taxon>Eukaryota</taxon>
        <taxon>Discoba</taxon>
        <taxon>Euglenozoa</taxon>
        <taxon>Kinetoplastea</taxon>
        <taxon>Metakinetoplastina</taxon>
        <taxon>Trypanosomatida</taxon>
        <taxon>Trypanosomatidae</taxon>
        <taxon>Leishmaniinae</taxon>
        <taxon>Crithidia</taxon>
    </lineage>
</organism>
<accession>P08966</accession>
<keyword id="KW-0067">ATP-binding</keyword>
<keyword id="KW-0963">Cytoplasm</keyword>
<keyword id="KW-0324">Glycolysis</keyword>
<keyword id="KW-0418">Kinase</keyword>
<keyword id="KW-0460">Magnesium</keyword>
<keyword id="KW-0479">Metal-binding</keyword>
<keyword id="KW-0547">Nucleotide-binding</keyword>
<keyword id="KW-0808">Transferase</keyword>
<name>PGKB_CRIFA</name>
<evidence type="ECO:0000250" key="1">
    <source>
        <dbReference type="UniProtKB" id="P00558"/>
    </source>
</evidence>
<evidence type="ECO:0000250" key="2">
    <source>
        <dbReference type="UniProtKB" id="P07378"/>
    </source>
</evidence>
<evidence type="ECO:0000250" key="3">
    <source>
        <dbReference type="UniProtKB" id="Q7SIB7"/>
    </source>
</evidence>
<evidence type="ECO:0000305" key="4"/>
<proteinExistence type="inferred from homology"/>
<gene>
    <name type="primary">PGKB</name>
    <name type="synonym">PGK-B</name>
</gene>
<protein>
    <recommendedName>
        <fullName>Phosphoglycerate kinase, cytosolic</fullName>
        <ecNumber evidence="1">2.7.2.3</ecNumber>
    </recommendedName>
    <alternativeName>
        <fullName>Phosphoglycerate kinase B</fullName>
    </alternativeName>
</protein>
<feature type="chain" id="PRO_0000145849" description="Phosphoglycerate kinase, cytosolic">
    <location>
        <begin position="1"/>
        <end position="417"/>
    </location>
</feature>
<feature type="binding site" evidence="1">
    <location>
        <position position="23"/>
    </location>
    <ligand>
        <name>(2R)-3-phosphoglycerate</name>
        <dbReference type="ChEBI" id="CHEBI:58272"/>
    </ligand>
</feature>
<feature type="binding site" evidence="3">
    <location>
        <position position="24"/>
    </location>
    <ligand>
        <name>(2R)-3-phosphoglycerate</name>
        <dbReference type="ChEBI" id="CHEBI:58272"/>
    </ligand>
</feature>
<feature type="binding site" evidence="1">
    <location>
        <position position="25"/>
    </location>
    <ligand>
        <name>(2R)-3-phosphoglycerate</name>
        <dbReference type="ChEBI" id="CHEBI:58272"/>
    </ligand>
</feature>
<feature type="binding site" evidence="3">
    <location>
        <position position="26"/>
    </location>
    <ligand>
        <name>(2R)-3-phosphoglycerate</name>
        <dbReference type="ChEBI" id="CHEBI:58272"/>
    </ligand>
</feature>
<feature type="binding site" evidence="3">
    <location>
        <position position="39"/>
    </location>
    <ligand>
        <name>(2R)-3-phosphoglycerate</name>
        <dbReference type="ChEBI" id="CHEBI:58272"/>
    </ligand>
</feature>
<feature type="binding site" evidence="1">
    <location>
        <position position="61"/>
    </location>
    <ligand>
        <name>(2R)-3-phosphoglycerate</name>
        <dbReference type="ChEBI" id="CHEBI:58272"/>
    </ligand>
</feature>
<feature type="binding site" evidence="3">
    <location>
        <position position="62"/>
    </location>
    <ligand>
        <name>(2R)-3-phosphoglycerate</name>
        <dbReference type="ChEBI" id="CHEBI:58272"/>
    </ligand>
</feature>
<feature type="binding site" evidence="1">
    <location>
        <position position="64"/>
    </location>
    <ligand>
        <name>(2R)-3-phosphoglycerate</name>
        <dbReference type="ChEBI" id="CHEBI:58272"/>
    </ligand>
</feature>
<feature type="binding site" evidence="3">
    <location>
        <position position="65"/>
    </location>
    <ligand>
        <name>(2R)-3-phosphoglycerate</name>
        <dbReference type="ChEBI" id="CHEBI:58272"/>
    </ligand>
</feature>
<feature type="binding site" evidence="3">
    <location>
        <position position="132"/>
    </location>
    <ligand>
        <name>(2R)-3-phosphoglycerate</name>
        <dbReference type="ChEBI" id="CHEBI:58272"/>
    </ligand>
</feature>
<feature type="binding site" evidence="1">
    <location>
        <position position="168"/>
    </location>
    <ligand>
        <name>(2R)-3-phosphoglycerate</name>
        <dbReference type="ChEBI" id="CHEBI:58272"/>
    </ligand>
</feature>
<feature type="binding site" evidence="3">
    <location>
        <position position="169"/>
    </location>
    <ligand>
        <name>(2R)-3-phosphoglycerate</name>
        <dbReference type="ChEBI" id="CHEBI:58272"/>
    </ligand>
</feature>
<feature type="binding site" evidence="1">
    <location>
        <position position="214"/>
    </location>
    <ligand>
        <name>ADP</name>
        <dbReference type="ChEBI" id="CHEBI:456216"/>
    </ligand>
</feature>
<feature type="binding site" evidence="1">
    <location>
        <position position="214"/>
    </location>
    <ligand>
        <name>CDP</name>
        <dbReference type="ChEBI" id="CHEBI:58069"/>
    </ligand>
</feature>
<feature type="binding site" evidence="2">
    <location>
        <position position="215"/>
    </location>
    <ligand>
        <name>ADP</name>
        <dbReference type="ChEBI" id="CHEBI:456216"/>
    </ligand>
</feature>
<feature type="binding site" evidence="3">
    <location>
        <position position="215"/>
    </location>
    <ligand>
        <name>AMP</name>
        <dbReference type="ChEBI" id="CHEBI:456215"/>
    </ligand>
</feature>
<feature type="binding site" evidence="3">
    <location>
        <position position="215"/>
    </location>
    <ligand>
        <name>ATP</name>
        <dbReference type="ChEBI" id="CHEBI:30616"/>
    </ligand>
</feature>
<feature type="binding site" evidence="1">
    <location>
        <position position="215"/>
    </location>
    <ligand>
        <name>Mg(2+)</name>
        <dbReference type="ChEBI" id="CHEBI:18420"/>
    </ligand>
</feature>
<feature type="binding site" evidence="2">
    <location>
        <position position="216"/>
    </location>
    <ligand>
        <name>(2R)-3-phosphoglycerate</name>
        <dbReference type="ChEBI" id="CHEBI:58272"/>
    </ligand>
</feature>
<feature type="binding site" evidence="3">
    <location>
        <position position="216"/>
    </location>
    <ligand>
        <name>AMP</name>
        <dbReference type="ChEBI" id="CHEBI:456215"/>
    </ligand>
</feature>
<feature type="binding site" evidence="1">
    <location>
        <position position="219"/>
    </location>
    <ligand>
        <name>CDP</name>
        <dbReference type="ChEBI" id="CHEBI:58069"/>
    </ligand>
</feature>
<feature type="binding site" evidence="1">
    <location>
        <position position="219"/>
    </location>
    <ligand>
        <name>Mg(2+)</name>
        <dbReference type="ChEBI" id="CHEBI:18420"/>
    </ligand>
</feature>
<feature type="binding site" evidence="2">
    <location>
        <position position="220"/>
    </location>
    <ligand>
        <name>ADP</name>
        <dbReference type="ChEBI" id="CHEBI:456216"/>
    </ligand>
</feature>
<feature type="binding site" evidence="3">
    <location>
        <position position="220"/>
    </location>
    <ligand>
        <name>AMP</name>
        <dbReference type="ChEBI" id="CHEBI:456215"/>
    </ligand>
</feature>
<feature type="binding site" evidence="3">
    <location>
        <position position="220"/>
    </location>
    <ligand>
        <name>ATP</name>
        <dbReference type="ChEBI" id="CHEBI:30616"/>
    </ligand>
</feature>
<feature type="binding site" evidence="1">
    <location>
        <position position="238"/>
    </location>
    <ligand>
        <name>ADP</name>
        <dbReference type="ChEBI" id="CHEBI:456216"/>
    </ligand>
</feature>
<feature type="binding site" evidence="1">
    <location>
        <position position="238"/>
    </location>
    <ligand>
        <name>CDP</name>
        <dbReference type="ChEBI" id="CHEBI:58069"/>
    </ligand>
</feature>
<feature type="binding site" evidence="3">
    <location>
        <position position="239"/>
    </location>
    <ligand>
        <name>AMP</name>
        <dbReference type="ChEBI" id="CHEBI:456215"/>
    </ligand>
</feature>
<feature type="binding site" evidence="3">
    <location>
        <position position="239"/>
    </location>
    <ligand>
        <name>ATP</name>
        <dbReference type="ChEBI" id="CHEBI:30616"/>
    </ligand>
</feature>
<feature type="binding site" evidence="2">
    <location>
        <position position="311"/>
    </location>
    <ligand>
        <name>ADP</name>
        <dbReference type="ChEBI" id="CHEBI:456216"/>
    </ligand>
</feature>
<feature type="binding site" evidence="3">
    <location>
        <position position="311"/>
    </location>
    <ligand>
        <name>AMP</name>
        <dbReference type="ChEBI" id="CHEBI:456215"/>
    </ligand>
</feature>
<feature type="binding site" evidence="3">
    <location>
        <position position="311"/>
    </location>
    <ligand>
        <name>ATP</name>
        <dbReference type="ChEBI" id="CHEBI:30616"/>
    </ligand>
</feature>
<feature type="binding site" evidence="2">
    <location>
        <position position="335"/>
    </location>
    <ligand>
        <name>ADP</name>
        <dbReference type="ChEBI" id="CHEBI:456216"/>
    </ligand>
</feature>
<feature type="binding site" evidence="1">
    <location>
        <position position="336"/>
    </location>
    <ligand>
        <name>CDP</name>
        <dbReference type="ChEBI" id="CHEBI:58069"/>
    </ligand>
</feature>
<feature type="binding site" evidence="1">
    <location>
        <position position="341"/>
    </location>
    <ligand>
        <name>ADP</name>
        <dbReference type="ChEBI" id="CHEBI:456216"/>
    </ligand>
</feature>
<feature type="binding site" evidence="1">
    <location>
        <position position="341"/>
    </location>
    <ligand>
        <name>CDP</name>
        <dbReference type="ChEBI" id="CHEBI:58069"/>
    </ligand>
</feature>
<feature type="binding site" evidence="2">
    <location>
        <position position="342"/>
    </location>
    <ligand>
        <name>ADP</name>
        <dbReference type="ChEBI" id="CHEBI:456216"/>
    </ligand>
</feature>
<feature type="binding site" evidence="3">
    <location>
        <position position="342"/>
    </location>
    <ligand>
        <name>AMP</name>
        <dbReference type="ChEBI" id="CHEBI:456215"/>
    </ligand>
</feature>
<feature type="binding site" evidence="3">
    <location>
        <position position="342"/>
    </location>
    <ligand>
        <name>ATP</name>
        <dbReference type="ChEBI" id="CHEBI:30616"/>
    </ligand>
</feature>
<feature type="binding site" evidence="2">
    <location>
        <position position="374"/>
    </location>
    <ligand>
        <name>ADP</name>
        <dbReference type="ChEBI" id="CHEBI:456216"/>
    </ligand>
</feature>
<feature type="binding site" evidence="3">
    <location>
        <position position="374"/>
    </location>
    <ligand>
        <name>ATP</name>
        <dbReference type="ChEBI" id="CHEBI:30616"/>
    </ligand>
</feature>
<feature type="binding site" evidence="3">
    <location>
        <position position="374"/>
    </location>
    <ligand>
        <name>Mg(2+)</name>
        <dbReference type="ChEBI" id="CHEBI:18420"/>
    </ligand>
</feature>
<feature type="binding site" evidence="2">
    <location>
        <position position="375"/>
    </location>
    <ligand>
        <name>ADP</name>
        <dbReference type="ChEBI" id="CHEBI:456216"/>
    </ligand>
</feature>
<feature type="binding site" evidence="3">
    <location>
        <position position="375"/>
    </location>
    <ligand>
        <name>ATP</name>
        <dbReference type="ChEBI" id="CHEBI:30616"/>
    </ligand>
</feature>
<comment type="catalytic activity">
    <reaction evidence="1">
        <text>(2R)-3-phosphoglycerate + ATP = (2R)-3-phospho-glyceroyl phosphate + ADP</text>
        <dbReference type="Rhea" id="RHEA:14801"/>
        <dbReference type="ChEBI" id="CHEBI:30616"/>
        <dbReference type="ChEBI" id="CHEBI:57604"/>
        <dbReference type="ChEBI" id="CHEBI:58272"/>
        <dbReference type="ChEBI" id="CHEBI:456216"/>
        <dbReference type="EC" id="2.7.2.3"/>
    </reaction>
</comment>
<comment type="cofactor">
    <cofactor evidence="2">
        <name>Mg(2+)</name>
        <dbReference type="ChEBI" id="CHEBI:18420"/>
    </cofactor>
</comment>
<comment type="pathway">
    <text>Carbohydrate degradation; glycolysis; pyruvate from D-glyceraldehyde 3-phosphate: step 2/5.</text>
</comment>
<comment type="subunit">
    <text>Monomer.</text>
</comment>
<comment type="subcellular location">
    <subcellularLocation>
        <location>Cytoplasm</location>
    </subcellularLocation>
</comment>
<comment type="domain">
    <text>This cytosolic PGK lacks a C-terminal extension of 38 AA which is present in the glycosomal isoenzyme.</text>
</comment>
<comment type="similarity">
    <text evidence="4">Belongs to the phosphoglycerate kinase family.</text>
</comment>